<sequence length="784" mass="87796">MKEGSSISVAVRVRPFTEREKGLLAETPKSKEFLGDGSLAVSNTSSNTFCTNGIRKIVRVLDDNVLIFDPPEENPLAKVQKSLLPAGKRFRDVRYAFDRLFGEEASQEDVYKGTTEPLLDSVLQGYNATVFAYGATGCGKTHTISGRPDDPGIIFLTMRALLDRVEGLKRTMNVDISVSYLEIYNEKIRDLLVQDPLSMEKPKSLNICEDAEQNVSVPGLSYFTPTNLEEVMEIIIRGNSNRTMSPTEANAVSSRSHAVLQIYITQTPKSGEKQEESESQNSHKVRSVFSFIDLAGSERASATKNRGKRLVEGANINRSLLALGNCINSLCEPRRRQHVPYRDSKLTRLLKFSLGGNCRTCMIVCISPSSEHYDETHNTLKYGNRAKNIKTKVSRNVVSVDRHVSEYVRTIYELRQKVSILQKRIAEESKQLALNKEVRKISSREIKMLDARSMLKNSFDGSRDLQKSLIEHVRTLRRIEDEITLTKMWISIAKESDAMSGHNIKSVETRLAKLYDQRSLITAKVNPEEICKTFQNSISHIVSSFKGEGADMYADMLQDDVDLLKSIIENQILDAKHESETFSSTSRKLIQNLFLLFPLLPGNAIDVNESLARAFDQLVGIVPSEPTIQVPNLIEKGKAPLLSMFEIPRSPSRFKARSPSKAARVLKKPLKKRVRFSEVPTTSSVPPVEIKNKDSKPKVEKSLDKHNMNNDRSFLVPSRDARNSLTSLSLHSNVAKNKSSHSSKWPTHTLSPIITTALKQPVRRISLVSQPLQKTGGTENTPNA</sequence>
<keyword id="KW-0067">ATP-binding</keyword>
<keyword id="KW-0131">Cell cycle</keyword>
<keyword id="KW-0132">Cell division</keyword>
<keyword id="KW-0137">Centromere</keyword>
<keyword id="KW-0158">Chromosome</keyword>
<keyword id="KW-0159">Chromosome partition</keyword>
<keyword id="KW-0175">Coiled coil</keyword>
<keyword id="KW-0963">Cytoplasm</keyword>
<keyword id="KW-0206">Cytoskeleton</keyword>
<keyword id="KW-0995">Kinetochore</keyword>
<keyword id="KW-0493">Microtubule</keyword>
<keyword id="KW-0498">Mitosis</keyword>
<keyword id="KW-0505">Motor protein</keyword>
<keyword id="KW-0547">Nucleotide-binding</keyword>
<keyword id="KW-1185">Reference proteome</keyword>
<reference key="1">
    <citation type="journal article" date="2002" name="Curr. Biol.">
        <title>Two kinesin-like Kin I family proteins in fission yeast regulate the establishment of metaphase and the onset of anaphase A.</title>
        <authorList>
            <person name="Garcia M.A."/>
            <person name="Koonrugsa N."/>
            <person name="Toda T."/>
        </authorList>
    </citation>
    <scope>NUCLEOTIDE SEQUENCE [GENOMIC DNA]</scope>
    <scope>FUNCTION</scope>
    <scope>INTERACTION WITH KLP5</scope>
    <scope>SUBCELLULAR LOCATION</scope>
</reference>
<reference key="2">
    <citation type="journal article" date="2002" name="Nature">
        <title>The genome sequence of Schizosaccharomyces pombe.</title>
        <authorList>
            <person name="Wood V."/>
            <person name="Gwilliam R."/>
            <person name="Rajandream M.A."/>
            <person name="Lyne M.H."/>
            <person name="Lyne R."/>
            <person name="Stewart A."/>
            <person name="Sgouros J.G."/>
            <person name="Peat N."/>
            <person name="Hayles J."/>
            <person name="Baker S.G."/>
            <person name="Basham D."/>
            <person name="Bowman S."/>
            <person name="Brooks K."/>
            <person name="Brown D."/>
            <person name="Brown S."/>
            <person name="Chillingworth T."/>
            <person name="Churcher C.M."/>
            <person name="Collins M."/>
            <person name="Connor R."/>
            <person name="Cronin A."/>
            <person name="Davis P."/>
            <person name="Feltwell T."/>
            <person name="Fraser A."/>
            <person name="Gentles S."/>
            <person name="Goble A."/>
            <person name="Hamlin N."/>
            <person name="Harris D.E."/>
            <person name="Hidalgo J."/>
            <person name="Hodgson G."/>
            <person name="Holroyd S."/>
            <person name="Hornsby T."/>
            <person name="Howarth S."/>
            <person name="Huckle E.J."/>
            <person name="Hunt S."/>
            <person name="Jagels K."/>
            <person name="James K.D."/>
            <person name="Jones L."/>
            <person name="Jones M."/>
            <person name="Leather S."/>
            <person name="McDonald S."/>
            <person name="McLean J."/>
            <person name="Mooney P."/>
            <person name="Moule S."/>
            <person name="Mungall K.L."/>
            <person name="Murphy L.D."/>
            <person name="Niblett D."/>
            <person name="Odell C."/>
            <person name="Oliver K."/>
            <person name="O'Neil S."/>
            <person name="Pearson D."/>
            <person name="Quail M.A."/>
            <person name="Rabbinowitsch E."/>
            <person name="Rutherford K.M."/>
            <person name="Rutter S."/>
            <person name="Saunders D."/>
            <person name="Seeger K."/>
            <person name="Sharp S."/>
            <person name="Skelton J."/>
            <person name="Simmonds M.N."/>
            <person name="Squares R."/>
            <person name="Squares S."/>
            <person name="Stevens K."/>
            <person name="Taylor K."/>
            <person name="Taylor R.G."/>
            <person name="Tivey A."/>
            <person name="Walsh S.V."/>
            <person name="Warren T."/>
            <person name="Whitehead S."/>
            <person name="Woodward J.R."/>
            <person name="Volckaert G."/>
            <person name="Aert R."/>
            <person name="Robben J."/>
            <person name="Grymonprez B."/>
            <person name="Weltjens I."/>
            <person name="Vanstreels E."/>
            <person name="Rieger M."/>
            <person name="Schaefer M."/>
            <person name="Mueller-Auer S."/>
            <person name="Gabel C."/>
            <person name="Fuchs M."/>
            <person name="Duesterhoeft A."/>
            <person name="Fritzc C."/>
            <person name="Holzer E."/>
            <person name="Moestl D."/>
            <person name="Hilbert H."/>
            <person name="Borzym K."/>
            <person name="Langer I."/>
            <person name="Beck A."/>
            <person name="Lehrach H."/>
            <person name="Reinhardt R."/>
            <person name="Pohl T.M."/>
            <person name="Eger P."/>
            <person name="Zimmermann W."/>
            <person name="Wedler H."/>
            <person name="Wambutt R."/>
            <person name="Purnelle B."/>
            <person name="Goffeau A."/>
            <person name="Cadieu E."/>
            <person name="Dreano S."/>
            <person name="Gloux S."/>
            <person name="Lelaure V."/>
            <person name="Mottier S."/>
            <person name="Galibert F."/>
            <person name="Aves S.J."/>
            <person name="Xiang Z."/>
            <person name="Hunt C."/>
            <person name="Moore K."/>
            <person name="Hurst S.M."/>
            <person name="Lucas M."/>
            <person name="Rochet M."/>
            <person name="Gaillardin C."/>
            <person name="Tallada V.A."/>
            <person name="Garzon A."/>
            <person name="Thode G."/>
            <person name="Daga R.R."/>
            <person name="Cruzado L."/>
            <person name="Jimenez J."/>
            <person name="Sanchez M."/>
            <person name="del Rey F."/>
            <person name="Benito J."/>
            <person name="Dominguez A."/>
            <person name="Revuelta J.L."/>
            <person name="Moreno S."/>
            <person name="Armstrong J."/>
            <person name="Forsburg S.L."/>
            <person name="Cerutti L."/>
            <person name="Lowe T."/>
            <person name="McCombie W.R."/>
            <person name="Paulsen I."/>
            <person name="Potashkin J."/>
            <person name="Shpakovski G.V."/>
            <person name="Ussery D."/>
            <person name="Barrell B.G."/>
            <person name="Nurse P."/>
        </authorList>
    </citation>
    <scope>NUCLEOTIDE SEQUENCE [LARGE SCALE GENOMIC DNA]</scope>
    <source>
        <strain>972 / ATCC 24843</strain>
    </source>
</reference>
<reference key="3">
    <citation type="journal article" date="2000" name="Genes Cells">
        <title>Large-scale screening of intracellular protein localization in living fission yeast cells by the use of a GFP-fusion genomic DNA library.</title>
        <authorList>
            <person name="Ding D.-Q."/>
            <person name="Tomita Y."/>
            <person name="Yamamoto A."/>
            <person name="Chikashige Y."/>
            <person name="Haraguchi T."/>
            <person name="Hiraoka Y."/>
        </authorList>
    </citation>
    <scope>NUCLEOTIDE SEQUENCE [LARGE SCALE GENOMIC DNA] OF 233-464</scope>
    <source>
        <strain>ATCC 38364 / 968</strain>
    </source>
</reference>
<reference key="4">
    <citation type="journal article" date="2005" name="EMBO J.">
        <title>The DASH complex and Klp5/Klp6 kinesin coordinate bipolar chromosome attachment in fission yeast.</title>
        <authorList>
            <person name="Sanchez-Perez I."/>
            <person name="Renwick S.J."/>
            <person name="Crawley K."/>
            <person name="Karig I."/>
            <person name="Buck V."/>
            <person name="Meadows J.C."/>
            <person name="Franco-Sanchez A."/>
            <person name="Fleig U."/>
            <person name="Toda T."/>
            <person name="Millar J.B."/>
        </authorList>
    </citation>
    <scope>DISRUPTION PHENOTYPE</scope>
</reference>
<name>KLP6_SCHPO</name>
<proteinExistence type="evidence at protein level"/>
<accession>O59751</accession>
<accession>Q9UTZ7</accession>
<feature type="chain" id="PRO_0000125389" description="Kinesin-like protein 6">
    <location>
        <begin position="1"/>
        <end position="784"/>
    </location>
</feature>
<feature type="domain" description="Kinesin motor" evidence="2">
    <location>
        <begin position="6"/>
        <end position="389"/>
    </location>
</feature>
<feature type="region of interest" description="Disordered" evidence="3">
    <location>
        <begin position="677"/>
        <end position="715"/>
    </location>
</feature>
<feature type="coiled-coil region" evidence="1">
    <location>
        <begin position="405"/>
        <end position="440"/>
    </location>
</feature>
<feature type="coiled-coil region" evidence="1">
    <location>
        <begin position="463"/>
        <end position="483"/>
    </location>
</feature>
<feature type="compositionally biased region" description="Basic and acidic residues" evidence="3">
    <location>
        <begin position="690"/>
        <end position="709"/>
    </location>
</feature>
<feature type="binding site" evidence="2">
    <location>
        <begin position="134"/>
        <end position="141"/>
    </location>
    <ligand>
        <name>ATP</name>
        <dbReference type="ChEBI" id="CHEBI:30616"/>
    </ligand>
</feature>
<evidence type="ECO:0000255" key="1"/>
<evidence type="ECO:0000255" key="2">
    <source>
        <dbReference type="PROSITE-ProRule" id="PRU00283"/>
    </source>
</evidence>
<evidence type="ECO:0000256" key="3">
    <source>
        <dbReference type="SAM" id="MobiDB-lite"/>
    </source>
</evidence>
<evidence type="ECO:0000269" key="4">
    <source>
    </source>
</evidence>
<evidence type="ECO:0000269" key="5">
    <source>
    </source>
</evidence>
<organism>
    <name type="scientific">Schizosaccharomyces pombe (strain 972 / ATCC 24843)</name>
    <name type="common">Fission yeast</name>
    <dbReference type="NCBI Taxonomy" id="284812"/>
    <lineage>
        <taxon>Eukaryota</taxon>
        <taxon>Fungi</taxon>
        <taxon>Dikarya</taxon>
        <taxon>Ascomycota</taxon>
        <taxon>Taphrinomycotina</taxon>
        <taxon>Schizosaccharomycetes</taxon>
        <taxon>Schizosaccharomycetales</taxon>
        <taxon>Schizosaccharomycetaceae</taxon>
        <taxon>Schizosaccharomyces</taxon>
    </lineage>
</organism>
<dbReference type="EMBL" id="AB072925">
    <property type="protein sequence ID" value="BAB69886.1"/>
    <property type="molecule type" value="Genomic_DNA"/>
</dbReference>
<dbReference type="EMBL" id="CU329671">
    <property type="protein sequence ID" value="CAA20063.2"/>
    <property type="molecule type" value="Genomic_DNA"/>
</dbReference>
<dbReference type="EMBL" id="AB027906">
    <property type="protein sequence ID" value="BAA87210.1"/>
    <property type="molecule type" value="Genomic_DNA"/>
</dbReference>
<dbReference type="PIR" id="T40594">
    <property type="entry name" value="T40594"/>
</dbReference>
<dbReference type="RefSeq" id="XP_001713122.1">
    <property type="nucleotide sequence ID" value="XM_001713070.2"/>
</dbReference>
<dbReference type="SMR" id="O59751"/>
<dbReference type="BioGRID" id="276253">
    <property type="interactions" value="143"/>
</dbReference>
<dbReference type="FunCoup" id="O59751">
    <property type="interactions" value="242"/>
</dbReference>
<dbReference type="IntAct" id="O59751">
    <property type="interactions" value="1"/>
</dbReference>
<dbReference type="STRING" id="284812.O59751"/>
<dbReference type="iPTMnet" id="O59751"/>
<dbReference type="PaxDb" id="4896-SPBC1685.15c.1"/>
<dbReference type="EnsemblFungi" id="SPBC1685.15c.1">
    <property type="protein sequence ID" value="SPBC1685.15c.1:pep"/>
    <property type="gene ID" value="SPBC1685.15c"/>
</dbReference>
<dbReference type="PomBase" id="SPBC1685.15c">
    <property type="gene designation" value="klp6"/>
</dbReference>
<dbReference type="VEuPathDB" id="FungiDB:SPBC1685.15c"/>
<dbReference type="eggNOG" id="KOG0242">
    <property type="taxonomic scope" value="Eukaryota"/>
</dbReference>
<dbReference type="HOGENOM" id="CLU_001485_21_1_1"/>
<dbReference type="InParanoid" id="O59751"/>
<dbReference type="OMA" id="EYVRVIY"/>
<dbReference type="PhylomeDB" id="O59751"/>
<dbReference type="PRO" id="PR:O59751"/>
<dbReference type="Proteomes" id="UP000002485">
    <property type="component" value="Chromosome II"/>
</dbReference>
<dbReference type="GO" id="GO:0055028">
    <property type="term" value="C:cortical microtubule"/>
    <property type="evidence" value="ECO:0000314"/>
    <property type="project" value="PomBase"/>
</dbReference>
<dbReference type="GO" id="GO:0005737">
    <property type="term" value="C:cytoplasm"/>
    <property type="evidence" value="ECO:0000314"/>
    <property type="project" value="PomBase"/>
</dbReference>
<dbReference type="GO" id="GO:1904511">
    <property type="term" value="C:cytoplasmic microtubule plus-end"/>
    <property type="evidence" value="ECO:0000314"/>
    <property type="project" value="PomBase"/>
</dbReference>
<dbReference type="GO" id="GO:0005829">
    <property type="term" value="C:cytosol"/>
    <property type="evidence" value="ECO:0007005"/>
    <property type="project" value="PomBase"/>
</dbReference>
<dbReference type="GO" id="GO:0005871">
    <property type="term" value="C:kinesin complex"/>
    <property type="evidence" value="ECO:0000318"/>
    <property type="project" value="GO_Central"/>
</dbReference>
<dbReference type="GO" id="GO:0016938">
    <property type="term" value="C:kinesin I complex"/>
    <property type="evidence" value="ECO:0000353"/>
    <property type="project" value="PomBase"/>
</dbReference>
<dbReference type="GO" id="GO:0000776">
    <property type="term" value="C:kinetochore"/>
    <property type="evidence" value="ECO:0000314"/>
    <property type="project" value="PomBase"/>
</dbReference>
<dbReference type="GO" id="GO:0015630">
    <property type="term" value="C:microtubule cytoskeleton"/>
    <property type="evidence" value="ECO:0000314"/>
    <property type="project" value="PomBase"/>
</dbReference>
<dbReference type="GO" id="GO:0072686">
    <property type="term" value="C:mitotic spindle"/>
    <property type="evidence" value="ECO:0000314"/>
    <property type="project" value="PomBase"/>
</dbReference>
<dbReference type="GO" id="GO:0061673">
    <property type="term" value="C:mitotic spindle astral microtubule"/>
    <property type="evidence" value="ECO:0000314"/>
    <property type="project" value="PomBase"/>
</dbReference>
<dbReference type="GO" id="GO:1990023">
    <property type="term" value="C:mitotic spindle midzone"/>
    <property type="evidence" value="ECO:0000314"/>
    <property type="project" value="PomBase"/>
</dbReference>
<dbReference type="GO" id="GO:0044732">
    <property type="term" value="C:mitotic spindle pole body"/>
    <property type="evidence" value="ECO:0007005"/>
    <property type="project" value="PomBase"/>
</dbReference>
<dbReference type="GO" id="GO:0005634">
    <property type="term" value="C:nucleus"/>
    <property type="evidence" value="ECO:0000314"/>
    <property type="project" value="PomBase"/>
</dbReference>
<dbReference type="GO" id="GO:0005873">
    <property type="term" value="C:plus-end kinesin complex"/>
    <property type="evidence" value="ECO:0000353"/>
    <property type="project" value="PomBase"/>
</dbReference>
<dbReference type="GO" id="GO:1990295">
    <property type="term" value="C:post-anaphase microtubule array"/>
    <property type="evidence" value="ECO:0000314"/>
    <property type="project" value="PomBase"/>
</dbReference>
<dbReference type="GO" id="GO:0005524">
    <property type="term" value="F:ATP binding"/>
    <property type="evidence" value="ECO:0007669"/>
    <property type="project" value="UniProtKB-KW"/>
</dbReference>
<dbReference type="GO" id="GO:0016887">
    <property type="term" value="F:ATP hydrolysis activity"/>
    <property type="evidence" value="ECO:0000314"/>
    <property type="project" value="PomBase"/>
</dbReference>
<dbReference type="GO" id="GO:0008017">
    <property type="term" value="F:microtubule binding"/>
    <property type="evidence" value="ECO:0000314"/>
    <property type="project" value="PomBase"/>
</dbReference>
<dbReference type="GO" id="GO:0008574">
    <property type="term" value="F:plus-end-directed microtubule motor activity"/>
    <property type="evidence" value="ECO:0000314"/>
    <property type="project" value="PomBase"/>
</dbReference>
<dbReference type="GO" id="GO:0051301">
    <property type="term" value="P:cell division"/>
    <property type="evidence" value="ECO:0007669"/>
    <property type="project" value="UniProtKB-KW"/>
</dbReference>
<dbReference type="GO" id="GO:1902426">
    <property type="term" value="P:deactivation of mitotic spindle assembly checkpoint"/>
    <property type="evidence" value="ECO:0000315"/>
    <property type="project" value="PomBase"/>
</dbReference>
<dbReference type="GO" id="GO:0007019">
    <property type="term" value="P:microtubule depolymerization"/>
    <property type="evidence" value="ECO:0000315"/>
    <property type="project" value="PomBase"/>
</dbReference>
<dbReference type="GO" id="GO:0007018">
    <property type="term" value="P:microtubule-based movement"/>
    <property type="evidence" value="ECO:0000318"/>
    <property type="project" value="GO_Central"/>
</dbReference>
<dbReference type="GO" id="GO:0007079">
    <property type="term" value="P:mitotic chromosome movement towards spindle pole"/>
    <property type="evidence" value="ECO:0000269"/>
    <property type="project" value="PomBase"/>
</dbReference>
<dbReference type="GO" id="GO:1990942">
    <property type="term" value="P:mitotic metaphase chromosome recapture"/>
    <property type="evidence" value="ECO:0000315"/>
    <property type="project" value="PomBase"/>
</dbReference>
<dbReference type="GO" id="GO:1990758">
    <property type="term" value="P:mitotic sister chromatid biorientation"/>
    <property type="evidence" value="ECO:0000315"/>
    <property type="project" value="PomBase"/>
</dbReference>
<dbReference type="GO" id="GO:0000070">
    <property type="term" value="P:mitotic sister chromatid segregation"/>
    <property type="evidence" value="ECO:0000315"/>
    <property type="project" value="PomBase"/>
</dbReference>
<dbReference type="GO" id="GO:0000022">
    <property type="term" value="P:mitotic spindle elongation"/>
    <property type="evidence" value="ECO:0000315"/>
    <property type="project" value="PomBase"/>
</dbReference>
<dbReference type="GO" id="GO:0061804">
    <property type="term" value="P:mitotic spindle formation (spindle phase one)"/>
    <property type="evidence" value="ECO:0000315"/>
    <property type="project" value="PomBase"/>
</dbReference>
<dbReference type="GO" id="GO:0007052">
    <property type="term" value="P:mitotic spindle organization"/>
    <property type="evidence" value="ECO:0000315"/>
    <property type="project" value="PomBase"/>
</dbReference>
<dbReference type="GO" id="GO:0070462">
    <property type="term" value="P:plus-end specific microtubule depolymerization"/>
    <property type="evidence" value="ECO:0000314"/>
    <property type="project" value="PomBase"/>
</dbReference>
<dbReference type="GO" id="GO:0140210">
    <property type="term" value="P:protein transport along microtubule to kinetochore"/>
    <property type="evidence" value="ECO:0000315"/>
    <property type="project" value="PomBase"/>
</dbReference>
<dbReference type="CDD" id="cd01370">
    <property type="entry name" value="KISc_KIP3_like"/>
    <property type="match status" value="1"/>
</dbReference>
<dbReference type="FunFam" id="3.40.850.10:FF:000090">
    <property type="entry name" value="Kinesin-like protein"/>
    <property type="match status" value="1"/>
</dbReference>
<dbReference type="Gene3D" id="3.40.850.10">
    <property type="entry name" value="Kinesin motor domain"/>
    <property type="match status" value="1"/>
</dbReference>
<dbReference type="InterPro" id="IPR027640">
    <property type="entry name" value="Kinesin-like_fam"/>
</dbReference>
<dbReference type="InterPro" id="IPR019821">
    <property type="entry name" value="Kinesin_motor_CS"/>
</dbReference>
<dbReference type="InterPro" id="IPR001752">
    <property type="entry name" value="Kinesin_motor_dom"/>
</dbReference>
<dbReference type="InterPro" id="IPR036961">
    <property type="entry name" value="Kinesin_motor_dom_sf"/>
</dbReference>
<dbReference type="InterPro" id="IPR027417">
    <property type="entry name" value="P-loop_NTPase"/>
</dbReference>
<dbReference type="PANTHER" id="PTHR47968">
    <property type="entry name" value="CENTROMERE PROTEIN E"/>
    <property type="match status" value="1"/>
</dbReference>
<dbReference type="PANTHER" id="PTHR47968:SF13">
    <property type="entry name" value="KINESIN-LIKE PROTEIN KIF19 ISOFORM X1"/>
    <property type="match status" value="1"/>
</dbReference>
<dbReference type="Pfam" id="PF00225">
    <property type="entry name" value="Kinesin"/>
    <property type="match status" value="1"/>
</dbReference>
<dbReference type="PRINTS" id="PR00380">
    <property type="entry name" value="KINESINHEAVY"/>
</dbReference>
<dbReference type="SMART" id="SM00129">
    <property type="entry name" value="KISc"/>
    <property type="match status" value="1"/>
</dbReference>
<dbReference type="SUPFAM" id="SSF52540">
    <property type="entry name" value="P-loop containing nucleoside triphosphate hydrolases"/>
    <property type="match status" value="1"/>
</dbReference>
<dbReference type="PROSITE" id="PS00411">
    <property type="entry name" value="KINESIN_MOTOR_1"/>
    <property type="match status" value="1"/>
</dbReference>
<dbReference type="PROSITE" id="PS50067">
    <property type="entry name" value="KINESIN_MOTOR_2"/>
    <property type="match status" value="1"/>
</dbReference>
<comment type="function">
    <text evidence="4">Has a role in establishing metaphase during mitosis. Required for chromosome segregation where it generates tension during kinetochore capturing.</text>
</comment>
<comment type="subunit">
    <text evidence="4">Heterodimer with klp5.</text>
</comment>
<comment type="interaction">
    <interactant intactId="EBI-1561745">
        <id>O59751</id>
    </interactant>
    <interactant intactId="EBI-1561765">
        <id>O14343</id>
        <label>klp5</label>
    </interactant>
    <organismsDiffer>false</organismsDiffer>
    <experiments>3</experiments>
</comment>
<comment type="subcellular location">
    <subcellularLocation>
        <location evidence="4">Cytoplasm</location>
    </subcellularLocation>
    <subcellularLocation>
        <location evidence="4">Cytoplasm</location>
        <location evidence="4">Cytoskeleton</location>
    </subcellularLocation>
    <subcellularLocation>
        <location evidence="4">Chromosome</location>
        <location evidence="4">Centromere</location>
        <location evidence="4">Kinetochore</location>
    </subcellularLocation>
    <subcellularLocation>
        <location evidence="4">Cytoplasm</location>
        <location evidence="4">Cytoskeleton</location>
        <location evidence="4">Spindle</location>
    </subcellularLocation>
    <text>Cytoplasmic microtubules in interphase, mitotic kinetochores in metaphase and spindle midzone in anaphase and telophase.</text>
</comment>
<comment type="disruption phenotype">
    <text evidence="5">Simultaneous disruption of dam1 is lethal and leads to the cut phenotype (septation without chromosome segregation).</text>
</comment>
<comment type="similarity">
    <text evidence="2">Belongs to the TRAFAC class myosin-kinesin ATPase superfamily. Kinesin family. Kinesin II subfamily.</text>
</comment>
<gene>
    <name type="primary">klp6</name>
    <name type="ORF">SPBC1685.15c</name>
    <name type="ORF">SPBC649.01c</name>
</gene>
<protein>
    <recommendedName>
        <fullName>Kinesin-like protein 6</fullName>
    </recommendedName>
</protein>